<evidence type="ECO:0000255" key="1">
    <source>
        <dbReference type="HAMAP-Rule" id="MF_00382"/>
    </source>
</evidence>
<evidence type="ECO:0000305" key="2"/>
<accession>Q0T4S6</accession>
<gene>
    <name evidence="1" type="primary">rplT</name>
    <name type="ordered locus">SFV_1507</name>
</gene>
<keyword id="KW-0687">Ribonucleoprotein</keyword>
<keyword id="KW-0689">Ribosomal protein</keyword>
<keyword id="KW-0694">RNA-binding</keyword>
<keyword id="KW-0699">rRNA-binding</keyword>
<organism>
    <name type="scientific">Shigella flexneri serotype 5b (strain 8401)</name>
    <dbReference type="NCBI Taxonomy" id="373384"/>
    <lineage>
        <taxon>Bacteria</taxon>
        <taxon>Pseudomonadati</taxon>
        <taxon>Pseudomonadota</taxon>
        <taxon>Gammaproteobacteria</taxon>
        <taxon>Enterobacterales</taxon>
        <taxon>Enterobacteriaceae</taxon>
        <taxon>Shigella</taxon>
    </lineage>
</organism>
<dbReference type="EMBL" id="CP000266">
    <property type="protein sequence ID" value="ABF03689.1"/>
    <property type="molecule type" value="Genomic_DNA"/>
</dbReference>
<dbReference type="RefSeq" id="WP_000124854.1">
    <property type="nucleotide sequence ID" value="NC_008258.1"/>
</dbReference>
<dbReference type="SMR" id="Q0T4S6"/>
<dbReference type="KEGG" id="sfv:SFV_1507"/>
<dbReference type="HOGENOM" id="CLU_123265_0_1_6"/>
<dbReference type="Proteomes" id="UP000000659">
    <property type="component" value="Chromosome"/>
</dbReference>
<dbReference type="GO" id="GO:1990904">
    <property type="term" value="C:ribonucleoprotein complex"/>
    <property type="evidence" value="ECO:0007669"/>
    <property type="project" value="UniProtKB-KW"/>
</dbReference>
<dbReference type="GO" id="GO:0005840">
    <property type="term" value="C:ribosome"/>
    <property type="evidence" value="ECO:0007669"/>
    <property type="project" value="UniProtKB-KW"/>
</dbReference>
<dbReference type="GO" id="GO:0019843">
    <property type="term" value="F:rRNA binding"/>
    <property type="evidence" value="ECO:0007669"/>
    <property type="project" value="UniProtKB-UniRule"/>
</dbReference>
<dbReference type="GO" id="GO:0003735">
    <property type="term" value="F:structural constituent of ribosome"/>
    <property type="evidence" value="ECO:0007669"/>
    <property type="project" value="InterPro"/>
</dbReference>
<dbReference type="GO" id="GO:0000027">
    <property type="term" value="P:ribosomal large subunit assembly"/>
    <property type="evidence" value="ECO:0007669"/>
    <property type="project" value="UniProtKB-UniRule"/>
</dbReference>
<dbReference type="GO" id="GO:0006412">
    <property type="term" value="P:translation"/>
    <property type="evidence" value="ECO:0007669"/>
    <property type="project" value="InterPro"/>
</dbReference>
<dbReference type="CDD" id="cd07026">
    <property type="entry name" value="Ribosomal_L20"/>
    <property type="match status" value="1"/>
</dbReference>
<dbReference type="FunFam" id="1.10.1900.20:FF:000001">
    <property type="entry name" value="50S ribosomal protein L20"/>
    <property type="match status" value="1"/>
</dbReference>
<dbReference type="Gene3D" id="6.10.160.10">
    <property type="match status" value="1"/>
</dbReference>
<dbReference type="Gene3D" id="1.10.1900.20">
    <property type="entry name" value="Ribosomal protein L20"/>
    <property type="match status" value="1"/>
</dbReference>
<dbReference type="HAMAP" id="MF_00382">
    <property type="entry name" value="Ribosomal_bL20"/>
    <property type="match status" value="1"/>
</dbReference>
<dbReference type="InterPro" id="IPR005813">
    <property type="entry name" value="Ribosomal_bL20"/>
</dbReference>
<dbReference type="InterPro" id="IPR049946">
    <property type="entry name" value="RIBOSOMAL_L20_CS"/>
</dbReference>
<dbReference type="InterPro" id="IPR035566">
    <property type="entry name" value="Ribosomal_protein_bL20_C"/>
</dbReference>
<dbReference type="NCBIfam" id="TIGR01032">
    <property type="entry name" value="rplT_bact"/>
    <property type="match status" value="1"/>
</dbReference>
<dbReference type="PANTHER" id="PTHR10986">
    <property type="entry name" value="39S RIBOSOMAL PROTEIN L20"/>
    <property type="match status" value="1"/>
</dbReference>
<dbReference type="Pfam" id="PF00453">
    <property type="entry name" value="Ribosomal_L20"/>
    <property type="match status" value="1"/>
</dbReference>
<dbReference type="PRINTS" id="PR00062">
    <property type="entry name" value="RIBOSOMALL20"/>
</dbReference>
<dbReference type="SUPFAM" id="SSF74731">
    <property type="entry name" value="Ribosomal protein L20"/>
    <property type="match status" value="1"/>
</dbReference>
<dbReference type="PROSITE" id="PS00937">
    <property type="entry name" value="RIBOSOMAL_L20"/>
    <property type="match status" value="1"/>
</dbReference>
<feature type="chain" id="PRO_1000049074" description="Large ribosomal subunit protein bL20">
    <location>
        <begin position="1"/>
        <end position="118"/>
    </location>
</feature>
<proteinExistence type="inferred from homology"/>
<reference key="1">
    <citation type="journal article" date="2006" name="BMC Genomics">
        <title>Complete genome sequence of Shigella flexneri 5b and comparison with Shigella flexneri 2a.</title>
        <authorList>
            <person name="Nie H."/>
            <person name="Yang F."/>
            <person name="Zhang X."/>
            <person name="Yang J."/>
            <person name="Chen L."/>
            <person name="Wang J."/>
            <person name="Xiong Z."/>
            <person name="Peng J."/>
            <person name="Sun L."/>
            <person name="Dong J."/>
            <person name="Xue Y."/>
            <person name="Xu X."/>
            <person name="Chen S."/>
            <person name="Yao Z."/>
            <person name="Shen Y."/>
            <person name="Jin Q."/>
        </authorList>
    </citation>
    <scope>NUCLEOTIDE SEQUENCE [LARGE SCALE GENOMIC DNA]</scope>
    <source>
        <strain>8401</strain>
    </source>
</reference>
<protein>
    <recommendedName>
        <fullName evidence="1">Large ribosomal subunit protein bL20</fullName>
    </recommendedName>
    <alternativeName>
        <fullName evidence="2">50S ribosomal protein L20</fullName>
    </alternativeName>
</protein>
<sequence length="118" mass="13527">MARVKRGVIARARHKKILKQAKGYYGARSRVYRVAFQAVIKAGQYAYRDRRQRKRQFRQLWIARINAAARQNGISYSKFINGLKKASVEIDRKILADIAVFDKVAFTTLVEKAKAALA</sequence>
<name>RL20_SHIF8</name>
<comment type="function">
    <text evidence="1">Binds directly to 23S ribosomal RNA and is necessary for the in vitro assembly process of the 50S ribosomal subunit. It is not involved in the protein synthesizing functions of that subunit.</text>
</comment>
<comment type="similarity">
    <text evidence="1">Belongs to the bacterial ribosomal protein bL20 family.</text>
</comment>